<dbReference type="EC" id="7.2.1.1" evidence="1"/>
<dbReference type="EMBL" id="AF117331">
    <property type="protein sequence ID" value="AAD29965.1"/>
    <property type="molecule type" value="Genomic_DNA"/>
</dbReference>
<dbReference type="EMBL" id="AE003852">
    <property type="protein sequence ID" value="AAF95436.1"/>
    <property type="molecule type" value="Genomic_DNA"/>
</dbReference>
<dbReference type="PIR" id="D82094">
    <property type="entry name" value="D82094"/>
</dbReference>
<dbReference type="RefSeq" id="NP_231923.1">
    <property type="nucleotide sequence ID" value="NC_002505.1"/>
</dbReference>
<dbReference type="RefSeq" id="WP_000092895.1">
    <property type="nucleotide sequence ID" value="NZ_LT906614.1"/>
</dbReference>
<dbReference type="PDB" id="8A1U">
    <property type="method" value="EM"/>
    <property type="resolution" value="2.86 A"/>
    <property type="chains" value="D=1-210"/>
</dbReference>
<dbReference type="PDB" id="8ACY">
    <property type="method" value="X-ray"/>
    <property type="resolution" value="3.50 A"/>
    <property type="chains" value="D=1-210"/>
</dbReference>
<dbReference type="PDB" id="8EVU">
    <property type="method" value="EM"/>
    <property type="resolution" value="2.58 A"/>
    <property type="chains" value="D=1-210"/>
</dbReference>
<dbReference type="PDBsum" id="8A1U"/>
<dbReference type="PDBsum" id="8ACY"/>
<dbReference type="PDBsum" id="8EVU"/>
<dbReference type="EMDB" id="EMD-15089"/>
<dbReference type="EMDB" id="EMD-28637"/>
<dbReference type="SMR" id="Q9X4Q6"/>
<dbReference type="DIP" id="DIP-61340N"/>
<dbReference type="IntAct" id="Q9X4Q6">
    <property type="interactions" value="1"/>
</dbReference>
<dbReference type="STRING" id="243277.VC_2292"/>
<dbReference type="DNASU" id="2613214"/>
<dbReference type="EnsemblBacteria" id="AAF95436">
    <property type="protein sequence ID" value="AAF95436"/>
    <property type="gene ID" value="VC_2292"/>
</dbReference>
<dbReference type="KEGG" id="vch:VC_2292"/>
<dbReference type="PATRIC" id="fig|243277.26.peg.2186"/>
<dbReference type="eggNOG" id="COG1347">
    <property type="taxonomic scope" value="Bacteria"/>
</dbReference>
<dbReference type="HOGENOM" id="CLU_046659_1_1_6"/>
<dbReference type="BioCyc" id="MetaCyc:MONOMER-16200"/>
<dbReference type="BRENDA" id="7.2.1.1">
    <property type="organism ID" value="15862"/>
</dbReference>
<dbReference type="Proteomes" id="UP000000584">
    <property type="component" value="Chromosome 1"/>
</dbReference>
<dbReference type="GO" id="GO:0005886">
    <property type="term" value="C:plasma membrane"/>
    <property type="evidence" value="ECO:0000318"/>
    <property type="project" value="GO_Central"/>
</dbReference>
<dbReference type="GO" id="GO:0016655">
    <property type="term" value="F:oxidoreductase activity, acting on NAD(P)H, quinone or similar compound as acceptor"/>
    <property type="evidence" value="ECO:0007669"/>
    <property type="project" value="UniProtKB-UniRule"/>
</dbReference>
<dbReference type="GO" id="GO:0006814">
    <property type="term" value="P:sodium ion transport"/>
    <property type="evidence" value="ECO:0007669"/>
    <property type="project" value="UniProtKB-UniRule"/>
</dbReference>
<dbReference type="HAMAP" id="MF_00428">
    <property type="entry name" value="NqrD"/>
    <property type="match status" value="1"/>
</dbReference>
<dbReference type="InterPro" id="IPR011292">
    <property type="entry name" value="NqrD"/>
</dbReference>
<dbReference type="InterPro" id="IPR003667">
    <property type="entry name" value="NqrDE/RnfAE"/>
</dbReference>
<dbReference type="NCBIfam" id="TIGR01939">
    <property type="entry name" value="nqrD"/>
    <property type="match status" value="1"/>
</dbReference>
<dbReference type="NCBIfam" id="NF006777">
    <property type="entry name" value="PRK09292.1"/>
    <property type="match status" value="1"/>
</dbReference>
<dbReference type="NCBIfam" id="NF009070">
    <property type="entry name" value="PRK12405.1"/>
    <property type="match status" value="1"/>
</dbReference>
<dbReference type="PANTHER" id="PTHR30586">
    <property type="entry name" value="ELECTRON TRANSPORT COMPLEX PROTEIN RNFE"/>
    <property type="match status" value="1"/>
</dbReference>
<dbReference type="PANTHER" id="PTHR30586:SF1">
    <property type="entry name" value="NA(+)-TRANSLOCATING NADH-QUINONE REDUCTASE SUBUNIT D"/>
    <property type="match status" value="1"/>
</dbReference>
<dbReference type="Pfam" id="PF02508">
    <property type="entry name" value="Rnf-Nqr"/>
    <property type="match status" value="1"/>
</dbReference>
<dbReference type="PIRSF" id="PIRSF006102">
    <property type="entry name" value="NQR_DE"/>
    <property type="match status" value="1"/>
</dbReference>
<keyword id="KW-0002">3D-structure</keyword>
<keyword id="KW-0997">Cell inner membrane</keyword>
<keyword id="KW-1003">Cell membrane</keyword>
<keyword id="KW-0406">Ion transport</keyword>
<keyword id="KW-0472">Membrane</keyword>
<keyword id="KW-0520">NAD</keyword>
<keyword id="KW-1185">Reference proteome</keyword>
<keyword id="KW-0915">Sodium</keyword>
<keyword id="KW-0739">Sodium transport</keyword>
<keyword id="KW-1278">Translocase</keyword>
<keyword id="KW-0812">Transmembrane</keyword>
<keyword id="KW-1133">Transmembrane helix</keyword>
<keyword id="KW-0813">Transport</keyword>
<keyword id="KW-0830">Ubiquinone</keyword>
<organism>
    <name type="scientific">Vibrio cholerae serotype O1 (strain ATCC 39315 / El Tor Inaba N16961)</name>
    <dbReference type="NCBI Taxonomy" id="243277"/>
    <lineage>
        <taxon>Bacteria</taxon>
        <taxon>Pseudomonadati</taxon>
        <taxon>Pseudomonadota</taxon>
        <taxon>Gammaproteobacteria</taxon>
        <taxon>Vibrionales</taxon>
        <taxon>Vibrionaceae</taxon>
        <taxon>Vibrio</taxon>
    </lineage>
</organism>
<sequence length="210" mass="22837">MSSAKELKKSVLAPVLDNNPIALQVLGVCSALAVTTKLETAFVMTLAVMFVTALSNFFVSLIRNHIPNSVRIIVQMAIIASLVIVVDQILKAYLYDISKQLSVFVGLIITNCIVMGRAEAFAMKSEPIPSFIDGIGNGLGYGFVLMTVGFFRELLGSGKLFGLEVLPLISNGGWYQPNGLMLLAPSAFFLIGFMIWAIRTFKPEQVEAKE</sequence>
<comment type="function">
    <text evidence="1">NQR complex catalyzes the reduction of ubiquinone-1 to ubiquinol by two successive reactions, coupled with the transport of Na(+) ions from the cytoplasm to the periplasm. NqrA to NqrE are probably involved in the second step, the conversion of ubisemiquinone to ubiquinol.</text>
</comment>
<comment type="catalytic activity">
    <reaction evidence="1">
        <text>a ubiquinone + n Na(+)(in) + NADH + H(+) = a ubiquinol + n Na(+)(out) + NAD(+)</text>
        <dbReference type="Rhea" id="RHEA:47748"/>
        <dbReference type="Rhea" id="RHEA-COMP:9565"/>
        <dbReference type="Rhea" id="RHEA-COMP:9566"/>
        <dbReference type="ChEBI" id="CHEBI:15378"/>
        <dbReference type="ChEBI" id="CHEBI:16389"/>
        <dbReference type="ChEBI" id="CHEBI:17976"/>
        <dbReference type="ChEBI" id="CHEBI:29101"/>
        <dbReference type="ChEBI" id="CHEBI:57540"/>
        <dbReference type="ChEBI" id="CHEBI:57945"/>
        <dbReference type="EC" id="7.2.1.1"/>
    </reaction>
</comment>
<comment type="subunit">
    <text evidence="1">Composed of six subunits; NqrA, NqrB, NqrC, NqrD, NqrE and NqrF.</text>
</comment>
<comment type="subcellular location">
    <subcellularLocation>
        <location evidence="1">Cell inner membrane</location>
        <topology evidence="1">Multi-pass membrane protein</topology>
    </subcellularLocation>
</comment>
<comment type="similarity">
    <text evidence="1">Belongs to the NqrDE/RnfAE family.</text>
</comment>
<gene>
    <name evidence="1" type="primary">nqrD</name>
    <name type="ordered locus">VC_2292</name>
</gene>
<proteinExistence type="evidence at protein level"/>
<accession>Q9X4Q6</accession>
<evidence type="ECO:0000255" key="1">
    <source>
        <dbReference type="HAMAP-Rule" id="MF_00428"/>
    </source>
</evidence>
<evidence type="ECO:0007829" key="2">
    <source>
        <dbReference type="PDB" id="8A1U"/>
    </source>
</evidence>
<name>NQRD_VIBCH</name>
<protein>
    <recommendedName>
        <fullName evidence="1">Na(+)-translocating NADH-quinone reductase subunit D</fullName>
        <shortName evidence="1">Na(+)-NQR subunit D</shortName>
        <shortName evidence="1">Na(+)-translocating NQR subunit D</shortName>
        <ecNumber evidence="1">7.2.1.1</ecNumber>
    </recommendedName>
    <alternativeName>
        <fullName evidence="1">NQR complex subunit D</fullName>
    </alternativeName>
    <alternativeName>
        <fullName evidence="1">NQR-1 subunit D</fullName>
    </alternativeName>
</protein>
<feature type="chain" id="PRO_0000214241" description="Na(+)-translocating NADH-quinone reductase subunit D">
    <location>
        <begin position="1"/>
        <end position="210"/>
    </location>
</feature>
<feature type="transmembrane region" description="Helical" evidence="1">
    <location>
        <begin position="42"/>
        <end position="62"/>
    </location>
</feature>
<feature type="transmembrane region" description="Helical" evidence="1">
    <location>
        <begin position="72"/>
        <end position="92"/>
    </location>
</feature>
<feature type="transmembrane region" description="Helical" evidence="1">
    <location>
        <begin position="103"/>
        <end position="123"/>
    </location>
</feature>
<feature type="transmembrane region" description="Helical" evidence="1">
    <location>
        <begin position="131"/>
        <end position="151"/>
    </location>
</feature>
<feature type="transmembrane region" description="Helical" evidence="1">
    <location>
        <begin position="178"/>
        <end position="198"/>
    </location>
</feature>
<feature type="helix" evidence="2">
    <location>
        <begin position="8"/>
        <end position="16"/>
    </location>
</feature>
<feature type="turn" evidence="2">
    <location>
        <begin position="20"/>
        <end position="23"/>
    </location>
</feature>
<feature type="helix" evidence="2">
    <location>
        <begin position="28"/>
        <end position="33"/>
    </location>
</feature>
<feature type="helix" evidence="2">
    <location>
        <begin position="34"/>
        <end position="36"/>
    </location>
</feature>
<feature type="helix" evidence="2">
    <location>
        <begin position="38"/>
        <end position="61"/>
    </location>
</feature>
<feature type="turn" evidence="2">
    <location>
        <begin position="62"/>
        <end position="65"/>
    </location>
</feature>
<feature type="helix" evidence="2">
    <location>
        <begin position="71"/>
        <end position="92"/>
    </location>
</feature>
<feature type="helix" evidence="2">
    <location>
        <begin position="95"/>
        <end position="101"/>
    </location>
</feature>
<feature type="helix" evidence="2">
    <location>
        <begin position="104"/>
        <end position="107"/>
    </location>
</feature>
<feature type="helix" evidence="2">
    <location>
        <begin position="108"/>
        <end position="110"/>
    </location>
</feature>
<feature type="helix" evidence="2">
    <location>
        <begin position="112"/>
        <end position="120"/>
    </location>
</feature>
<feature type="helix" evidence="2">
    <location>
        <begin position="122"/>
        <end position="124"/>
    </location>
</feature>
<feature type="helix" evidence="2">
    <location>
        <begin position="127"/>
        <end position="157"/>
    </location>
</feature>
<feature type="strand" evidence="2">
    <location>
        <begin position="158"/>
        <end position="160"/>
    </location>
</feature>
<feature type="strand" evidence="2">
    <location>
        <begin position="163"/>
        <end position="166"/>
    </location>
</feature>
<feature type="helix" evidence="2">
    <location>
        <begin position="169"/>
        <end position="171"/>
    </location>
</feature>
<feature type="helix" evidence="2">
    <location>
        <begin position="179"/>
        <end position="182"/>
    </location>
</feature>
<feature type="helix" evidence="2">
    <location>
        <begin position="184"/>
        <end position="201"/>
    </location>
</feature>
<feature type="helix" evidence="2">
    <location>
        <begin position="203"/>
        <end position="205"/>
    </location>
</feature>
<reference key="1">
    <citation type="journal article" date="1999" name="Proc. Natl. Acad. Sci. U.S.A.">
        <title>Effects of changes in membrane sodium flux on virulence gene expression in Vibrio cholerae.</title>
        <authorList>
            <person name="Haese C.C."/>
            <person name="Mekalanos J.J."/>
        </authorList>
    </citation>
    <scope>NUCLEOTIDE SEQUENCE [GENOMIC DNA]</scope>
    <source>
        <strain>ATCC 39315 / El Tor Inaba N16961</strain>
    </source>
</reference>
<reference key="2">
    <citation type="journal article" date="2000" name="Nature">
        <title>DNA sequence of both chromosomes of the cholera pathogen Vibrio cholerae.</title>
        <authorList>
            <person name="Heidelberg J.F."/>
            <person name="Eisen J.A."/>
            <person name="Nelson W.C."/>
            <person name="Clayton R.A."/>
            <person name="Gwinn M.L."/>
            <person name="Dodson R.J."/>
            <person name="Haft D.H."/>
            <person name="Hickey E.K."/>
            <person name="Peterson J.D."/>
            <person name="Umayam L.A."/>
            <person name="Gill S.R."/>
            <person name="Nelson K.E."/>
            <person name="Read T.D."/>
            <person name="Tettelin H."/>
            <person name="Richardson D.L."/>
            <person name="Ermolaeva M.D."/>
            <person name="Vamathevan J.J."/>
            <person name="Bass S."/>
            <person name="Qin H."/>
            <person name="Dragoi I."/>
            <person name="Sellers P."/>
            <person name="McDonald L.A."/>
            <person name="Utterback T.R."/>
            <person name="Fleischmann R.D."/>
            <person name="Nierman W.C."/>
            <person name="White O."/>
            <person name="Salzberg S.L."/>
            <person name="Smith H.O."/>
            <person name="Colwell R.R."/>
            <person name="Mekalanos J.J."/>
            <person name="Venter J.C."/>
            <person name="Fraser C.M."/>
        </authorList>
    </citation>
    <scope>NUCLEOTIDE SEQUENCE [LARGE SCALE GENOMIC DNA]</scope>
    <source>
        <strain>ATCC 39315 / El Tor Inaba N16961</strain>
    </source>
</reference>